<keyword id="KW-1185">Reference proteome</keyword>
<proteinExistence type="evidence at transcript level"/>
<organism>
    <name type="scientific">Xenopus tropicalis</name>
    <name type="common">Western clawed frog</name>
    <name type="synonym">Silurana tropicalis</name>
    <dbReference type="NCBI Taxonomy" id="8364"/>
    <lineage>
        <taxon>Eukaryota</taxon>
        <taxon>Metazoa</taxon>
        <taxon>Chordata</taxon>
        <taxon>Craniata</taxon>
        <taxon>Vertebrata</taxon>
        <taxon>Euteleostomi</taxon>
        <taxon>Amphibia</taxon>
        <taxon>Batrachia</taxon>
        <taxon>Anura</taxon>
        <taxon>Pipoidea</taxon>
        <taxon>Pipidae</taxon>
        <taxon>Xenopodinae</taxon>
        <taxon>Xenopus</taxon>
        <taxon>Silurana</taxon>
    </lineage>
</organism>
<reference key="1">
    <citation type="submission" date="2005-10" db="EMBL/GenBank/DDBJ databases">
        <authorList>
            <consortium name="NIH - Xenopus Gene Collection (XGC) project"/>
        </authorList>
    </citation>
    <scope>NUCLEOTIDE SEQUENCE [LARGE SCALE MRNA]</scope>
</reference>
<name>LYSM2_XENTR</name>
<sequence>MADLSPVLQPHREGGSRYGYTMFPGLECESEAELSLSLARTKTRSYGSTASVAAPLSERYIEHRLSPSDTLQGIALKYGVTMEQIKRANKLFSTDCIFLRKSLNIPVISKKGSLFNGLGSLDSPENETQDNCNSPTKEPALAEAHTVSIPSSAKTNQPIVRSDEELSAKDFLQRLDLQIKRSTQAAQRLKEEDLRHDDSYATCSYQH</sequence>
<gene>
    <name type="primary">lysmd2</name>
</gene>
<accession>Q3B7I8</accession>
<feature type="chain" id="PRO_0000248006" description="LysM and putative peptidoglycan-binding domain-containing protein 2">
    <location>
        <begin position="1"/>
        <end position="207"/>
    </location>
</feature>
<feature type="domain" description="LysM" evidence="1">
    <location>
        <begin position="61"/>
        <end position="105"/>
    </location>
</feature>
<feature type="region of interest" description="Disordered" evidence="2">
    <location>
        <begin position="186"/>
        <end position="207"/>
    </location>
</feature>
<feature type="compositionally biased region" description="Basic and acidic residues" evidence="2">
    <location>
        <begin position="188"/>
        <end position="199"/>
    </location>
</feature>
<protein>
    <recommendedName>
        <fullName>LysM and putative peptidoglycan-binding domain-containing protein 2</fullName>
    </recommendedName>
</protein>
<dbReference type="EMBL" id="BC107589">
    <property type="protein sequence ID" value="AAI07590.1"/>
    <property type="molecule type" value="mRNA"/>
</dbReference>
<dbReference type="EMBL" id="BC118885">
    <property type="protein sequence ID" value="AAI18886.1"/>
    <property type="molecule type" value="mRNA"/>
</dbReference>
<dbReference type="RefSeq" id="NP_001037868.1">
    <property type="nucleotide sequence ID" value="NM_001044403.2"/>
</dbReference>
<dbReference type="SMR" id="Q3B7I8"/>
<dbReference type="FunCoup" id="Q3B7I8">
    <property type="interactions" value="163"/>
</dbReference>
<dbReference type="PaxDb" id="8364-ENSXETP00000044860"/>
<dbReference type="DNASU" id="733450"/>
<dbReference type="GeneID" id="733450"/>
<dbReference type="KEGG" id="xtr:733450"/>
<dbReference type="AGR" id="Xenbase:XB-GENE-940230"/>
<dbReference type="CTD" id="256586"/>
<dbReference type="Xenbase" id="XB-GENE-940230">
    <property type="gene designation" value="lysmd2"/>
</dbReference>
<dbReference type="eggNOG" id="ENOG502S0XR">
    <property type="taxonomic scope" value="Eukaryota"/>
</dbReference>
<dbReference type="HOGENOM" id="CLU_079453_1_0_1"/>
<dbReference type="InParanoid" id="Q3B7I8"/>
<dbReference type="OMA" id="HRMDVQI"/>
<dbReference type="OrthoDB" id="2107166at2759"/>
<dbReference type="PhylomeDB" id="Q3B7I8"/>
<dbReference type="TreeFam" id="TF318444"/>
<dbReference type="Proteomes" id="UP000008143">
    <property type="component" value="Chromosome 3"/>
</dbReference>
<dbReference type="Bgee" id="ENSXETG00000020754">
    <property type="expression patterns" value="Expressed in 2-cell stage embryo and 13 other cell types or tissues"/>
</dbReference>
<dbReference type="CDD" id="cd00118">
    <property type="entry name" value="LysM"/>
    <property type="match status" value="1"/>
</dbReference>
<dbReference type="Gene3D" id="3.10.350.10">
    <property type="entry name" value="LysM domain"/>
    <property type="match status" value="1"/>
</dbReference>
<dbReference type="InterPro" id="IPR045030">
    <property type="entry name" value="LYSM1-4"/>
</dbReference>
<dbReference type="InterPro" id="IPR018392">
    <property type="entry name" value="LysM_dom"/>
</dbReference>
<dbReference type="InterPro" id="IPR036779">
    <property type="entry name" value="LysM_dom_sf"/>
</dbReference>
<dbReference type="PANTHER" id="PTHR20932:SF4">
    <property type="entry name" value="AND PUTATIVE PEPTIDOGLYCAN-BINDING DOMAIN-CONTAINING PROTEIN 2-RELATED"/>
    <property type="match status" value="1"/>
</dbReference>
<dbReference type="PANTHER" id="PTHR20932">
    <property type="entry name" value="LYSM AND PUTATIVE PEPTIDOGLYCAN-BINDING DOMAIN-CONTAINING PROTEIN"/>
    <property type="match status" value="1"/>
</dbReference>
<dbReference type="Pfam" id="PF01476">
    <property type="entry name" value="LysM"/>
    <property type="match status" value="1"/>
</dbReference>
<dbReference type="SMART" id="SM00257">
    <property type="entry name" value="LysM"/>
    <property type="match status" value="1"/>
</dbReference>
<dbReference type="SUPFAM" id="SSF54106">
    <property type="entry name" value="LysM domain"/>
    <property type="match status" value="1"/>
</dbReference>
<dbReference type="PROSITE" id="PS51782">
    <property type="entry name" value="LYSM"/>
    <property type="match status" value="1"/>
</dbReference>
<evidence type="ECO:0000255" key="1">
    <source>
        <dbReference type="PROSITE-ProRule" id="PRU01118"/>
    </source>
</evidence>
<evidence type="ECO:0000256" key="2">
    <source>
        <dbReference type="SAM" id="MobiDB-lite"/>
    </source>
</evidence>